<reference key="1">
    <citation type="journal article" date="1995" name="Plant Mol. Biol.">
        <title>Chlamydomonas reinhardtii thioredoxins: structure of the genes coding for the chloroplastic m and cytosolic h isoforms; expression in Escherichia coli of the recombinant proteins, purification and biochemical properties.</title>
        <authorList>
            <person name="Stein M."/>
            <person name="Jacquot J.-P."/>
            <person name="Jeannette E."/>
            <person name="Decottignies P."/>
            <person name="Hodges M."/>
            <person name="Lancelin J.-M."/>
            <person name="Mittard V."/>
            <person name="Schmitter J.-M."/>
            <person name="Miginiac-Maslow M."/>
        </authorList>
    </citation>
    <scope>NUCLEOTIDE SEQUENCE [GENOMIC DNA / MRNA]</scope>
</reference>
<reference key="2">
    <citation type="journal article" date="1991" name="Eur. J. Biochem.">
        <title>Characterization and primary structure of a second thioredoxin from the green alga, Chlamydomonas reinhardtii.</title>
        <authorList>
            <person name="Decottignies P."/>
            <person name="Schmitter J.-M."/>
            <person name="Dutka S."/>
            <person name="Jacquot J.-P."/>
            <person name="Miginiac-Maslow M."/>
        </authorList>
    </citation>
    <scope>PROTEIN SEQUENCE OF 2-112</scope>
    <scope>DISULFIDE BOND</scope>
    <source>
        <strain>137c / CC-125</strain>
    </source>
</reference>
<reference key="3">
    <citation type="journal article" date="1997" name="Eur. J. Biochem.">
        <title>NMR solution structure of an oxidised thioredoxin h from the eukaryotic green alga Chlamydomonas reinhardtii.</title>
        <authorList>
            <person name="Mittard V."/>
            <person name="Blackledge M.J."/>
            <person name="Stein M."/>
            <person name="Jacquot J.-P."/>
            <person name="Marion D."/>
            <person name="Lancelin J.-M."/>
        </authorList>
    </citation>
    <scope>STRUCTURE BY NMR</scope>
</reference>
<reference key="4">
    <citation type="journal article" date="2001" name="Biochem. J.">
        <title>Crystal structure of the wild-type and D30A mutant thioredoxin h of Chlamydomonas reinhardtii and implications for the catalytic mechanism.</title>
        <authorList>
            <person name="Menchise V."/>
            <person name="Corbier C."/>
            <person name="Didierjean C."/>
            <person name="Saviano M."/>
            <person name="Benedetti E."/>
            <person name="Jacquot J.-P."/>
            <person name="Aubry A."/>
        </authorList>
    </citation>
    <scope>X-RAY CRYSTALLOGRAPHY (2.1 ANGSTROMS)</scope>
</reference>
<dbReference type="EMBL" id="X78822">
    <property type="protein sequence ID" value="CAA55399.1"/>
    <property type="molecule type" value="mRNA"/>
</dbReference>
<dbReference type="EMBL" id="X80887">
    <property type="protein sequence ID" value="CAA56850.1"/>
    <property type="molecule type" value="Genomic_DNA"/>
</dbReference>
<dbReference type="PIR" id="S57775">
    <property type="entry name" value="S57775"/>
</dbReference>
<dbReference type="RefSeq" id="XP_001694574.1">
    <property type="nucleotide sequence ID" value="XM_001694522.1"/>
</dbReference>
<dbReference type="PDB" id="1EP7">
    <property type="method" value="X-ray"/>
    <property type="resolution" value="2.10 A"/>
    <property type="chains" value="A/B=2-113"/>
</dbReference>
<dbReference type="PDB" id="1EP8">
    <property type="method" value="X-ray"/>
    <property type="resolution" value="2.20 A"/>
    <property type="chains" value="A/B=2-113"/>
</dbReference>
<dbReference type="PDB" id="1TOF">
    <property type="method" value="NMR"/>
    <property type="chains" value="A=2-113"/>
</dbReference>
<dbReference type="PDB" id="6I19">
    <property type="method" value="X-ray"/>
    <property type="resolution" value="1.38 A"/>
    <property type="chains" value="A/B=1-113"/>
</dbReference>
<dbReference type="PDB" id="6Q46">
    <property type="method" value="X-ray"/>
    <property type="resolution" value="1.70 A"/>
    <property type="chains" value="A/B=1-113"/>
</dbReference>
<dbReference type="PDB" id="6Q47">
    <property type="method" value="X-ray"/>
    <property type="resolution" value="1.57 A"/>
    <property type="chains" value="A/B=1-113"/>
</dbReference>
<dbReference type="PDB" id="6Q6T">
    <property type="method" value="X-ray"/>
    <property type="resolution" value="0.94 A"/>
    <property type="chains" value="A=1-113"/>
</dbReference>
<dbReference type="PDB" id="6Q6U">
    <property type="method" value="X-ray"/>
    <property type="resolution" value="1.81 A"/>
    <property type="chains" value="A/B=1-113"/>
</dbReference>
<dbReference type="PDB" id="6Q6V">
    <property type="method" value="X-ray"/>
    <property type="resolution" value="1.22 A"/>
    <property type="chains" value="A/B=1-113"/>
</dbReference>
<dbReference type="PDBsum" id="1EP7"/>
<dbReference type="PDBsum" id="1EP8"/>
<dbReference type="PDBsum" id="1TOF"/>
<dbReference type="PDBsum" id="6I19"/>
<dbReference type="PDBsum" id="6Q46"/>
<dbReference type="PDBsum" id="6Q47"/>
<dbReference type="PDBsum" id="6Q6T"/>
<dbReference type="PDBsum" id="6Q6U"/>
<dbReference type="PDBsum" id="6Q6V"/>
<dbReference type="SMR" id="P80028"/>
<dbReference type="PaxDb" id="3055-EDP02569"/>
<dbReference type="ProMEX" id="P80028"/>
<dbReference type="EnsemblPlants" id="PNW78569">
    <property type="protein sequence ID" value="PNW78569"/>
    <property type="gene ID" value="CHLRE_09g391900v5"/>
</dbReference>
<dbReference type="Gramene" id="PNW78569">
    <property type="protein sequence ID" value="PNW78569"/>
    <property type="gene ID" value="CHLRE_09g391900v5"/>
</dbReference>
<dbReference type="KEGG" id="cre:CHLRE_09g391900v5"/>
<dbReference type="eggNOG" id="KOG0907">
    <property type="taxonomic scope" value="Eukaryota"/>
</dbReference>
<dbReference type="HOGENOM" id="CLU_090389_10_2_1"/>
<dbReference type="OrthoDB" id="2121326at2759"/>
<dbReference type="EvolutionaryTrace" id="P80028"/>
<dbReference type="GO" id="GO:0005737">
    <property type="term" value="C:cytoplasm"/>
    <property type="evidence" value="ECO:0007669"/>
    <property type="project" value="UniProtKB-SubCell"/>
</dbReference>
<dbReference type="CDD" id="cd02947">
    <property type="entry name" value="TRX_family"/>
    <property type="match status" value="1"/>
</dbReference>
<dbReference type="FunFam" id="3.40.30.10:FF:000245">
    <property type="entry name" value="Thioredoxin"/>
    <property type="match status" value="1"/>
</dbReference>
<dbReference type="Gene3D" id="3.40.30.10">
    <property type="entry name" value="Glutaredoxin"/>
    <property type="match status" value="1"/>
</dbReference>
<dbReference type="InterPro" id="IPR036249">
    <property type="entry name" value="Thioredoxin-like_sf"/>
</dbReference>
<dbReference type="InterPro" id="IPR017937">
    <property type="entry name" value="Thioredoxin_CS"/>
</dbReference>
<dbReference type="InterPro" id="IPR013766">
    <property type="entry name" value="Thioredoxin_domain"/>
</dbReference>
<dbReference type="PANTHER" id="PTHR46115">
    <property type="entry name" value="THIOREDOXIN-LIKE PROTEIN 1"/>
    <property type="match status" value="1"/>
</dbReference>
<dbReference type="Pfam" id="PF00085">
    <property type="entry name" value="Thioredoxin"/>
    <property type="match status" value="1"/>
</dbReference>
<dbReference type="PRINTS" id="PR00421">
    <property type="entry name" value="THIOREDOXIN"/>
</dbReference>
<dbReference type="SUPFAM" id="SSF52833">
    <property type="entry name" value="Thioredoxin-like"/>
    <property type="match status" value="1"/>
</dbReference>
<dbReference type="PROSITE" id="PS00194">
    <property type="entry name" value="THIOREDOXIN_1"/>
    <property type="match status" value="1"/>
</dbReference>
<dbReference type="PROSITE" id="PS51352">
    <property type="entry name" value="THIOREDOXIN_2"/>
    <property type="match status" value="1"/>
</dbReference>
<gene>
    <name type="primary">TRXH</name>
</gene>
<evidence type="ECO:0000255" key="1">
    <source>
        <dbReference type="PROSITE-ProRule" id="PRU00691"/>
    </source>
</evidence>
<evidence type="ECO:0000269" key="2">
    <source>
    </source>
</evidence>
<evidence type="ECO:0000305" key="3"/>
<evidence type="ECO:0007829" key="4">
    <source>
        <dbReference type="PDB" id="1TOF"/>
    </source>
</evidence>
<evidence type="ECO:0007829" key="5">
    <source>
        <dbReference type="PDB" id="6Q6T"/>
    </source>
</evidence>
<sequence>MGGSVIVIDSKAAWDAQLAKGKEEHKPIVVDFTATWCGPCKMIAPLFETLSNDYAGKVIFLKVDVDAVAAVAEAAGITAMPTFHVYKDGVKADDLVGASQDKLKALVAKHAAA</sequence>
<name>TRXH_CHLRE</name>
<organism>
    <name type="scientific">Chlamydomonas reinhardtii</name>
    <name type="common">Chlamydomonas smithii</name>
    <dbReference type="NCBI Taxonomy" id="3055"/>
    <lineage>
        <taxon>Eukaryota</taxon>
        <taxon>Viridiplantae</taxon>
        <taxon>Chlorophyta</taxon>
        <taxon>core chlorophytes</taxon>
        <taxon>Chlorophyceae</taxon>
        <taxon>CS clade</taxon>
        <taxon>Chlamydomonadales</taxon>
        <taxon>Chlamydomonadaceae</taxon>
        <taxon>Chlamydomonas</taxon>
    </lineage>
</organism>
<feature type="initiator methionine" description="Removed" evidence="2">
    <location>
        <position position="1"/>
    </location>
</feature>
<feature type="chain" id="PRO_0000120055" description="Thioredoxin H-type">
    <location>
        <begin position="2"/>
        <end position="113"/>
    </location>
</feature>
<feature type="domain" description="Thioredoxin" evidence="1">
    <location>
        <begin position="2"/>
        <end position="112"/>
    </location>
</feature>
<feature type="active site" description="Nucleophile">
    <location>
        <position position="37"/>
    </location>
</feature>
<feature type="active site" description="Nucleophile">
    <location>
        <position position="40"/>
    </location>
</feature>
<feature type="site" description="Deprotonates C-terminal active site Cys">
    <location>
        <position position="31"/>
    </location>
</feature>
<feature type="site" description="Contributes to redox potential value">
    <location>
        <position position="38"/>
    </location>
</feature>
<feature type="site" description="Contributes to redox potential value">
    <location>
        <position position="39"/>
    </location>
</feature>
<feature type="disulfide bond" description="Redox-active" evidence="1 2">
    <location>
        <begin position="37"/>
        <end position="40"/>
    </location>
</feature>
<feature type="strand" evidence="5">
    <location>
        <begin position="5"/>
        <end position="8"/>
    </location>
</feature>
<feature type="helix" evidence="5">
    <location>
        <begin position="11"/>
        <end position="24"/>
    </location>
</feature>
<feature type="strand" evidence="5">
    <location>
        <begin position="28"/>
        <end position="33"/>
    </location>
</feature>
<feature type="strand" evidence="4">
    <location>
        <begin position="35"/>
        <end position="37"/>
    </location>
</feature>
<feature type="helix" evidence="5">
    <location>
        <begin position="38"/>
        <end position="53"/>
    </location>
</feature>
<feature type="turn" evidence="5">
    <location>
        <begin position="54"/>
        <end position="57"/>
    </location>
</feature>
<feature type="strand" evidence="5">
    <location>
        <begin position="59"/>
        <end position="64"/>
    </location>
</feature>
<feature type="turn" evidence="5">
    <location>
        <begin position="65"/>
        <end position="67"/>
    </location>
</feature>
<feature type="helix" evidence="5">
    <location>
        <begin position="69"/>
        <end position="74"/>
    </location>
</feature>
<feature type="strand" evidence="5">
    <location>
        <begin position="79"/>
        <end position="87"/>
    </location>
</feature>
<feature type="strand" evidence="5">
    <location>
        <begin position="90"/>
        <end position="97"/>
    </location>
</feature>
<feature type="helix" evidence="5">
    <location>
        <begin position="100"/>
        <end position="110"/>
    </location>
</feature>
<comment type="function">
    <text>Participates in various redox reactions through the reversible oxidation of the active center dithiol to a disulfide. The H form is known to activate a number of cytosolic enzymes.</text>
</comment>
<comment type="subcellular location">
    <subcellularLocation>
        <location>Cytoplasm</location>
    </subcellularLocation>
</comment>
<comment type="miscellaneous">
    <text>This thioredoxin cannot be used as a substrate for E.coli NADPH: thioredoxin reductase, but is a substrate of spinach ferredoxin-thioredoxin reductase and can activate NADP-MDH.</text>
</comment>
<comment type="similarity">
    <text evidence="3">Belongs to the thioredoxin family. Plant H-type subfamily.</text>
</comment>
<accession>P80028</accession>
<keyword id="KW-0002">3D-structure</keyword>
<keyword id="KW-0963">Cytoplasm</keyword>
<keyword id="KW-0903">Direct protein sequencing</keyword>
<keyword id="KW-1015">Disulfide bond</keyword>
<keyword id="KW-0249">Electron transport</keyword>
<keyword id="KW-0676">Redox-active center</keyword>
<keyword id="KW-0813">Transport</keyword>
<proteinExistence type="evidence at protein level"/>
<protein>
    <recommendedName>
        <fullName>Thioredoxin H-type</fullName>
        <shortName>Trx-H</shortName>
    </recommendedName>
    <alternativeName>
        <fullName>Thioredoxin-CH1</fullName>
    </alternativeName>
</protein>